<evidence type="ECO:0000255" key="1">
    <source>
        <dbReference type="HAMAP-Rule" id="MF_02001"/>
    </source>
</evidence>
<evidence type="ECO:0000255" key="2">
    <source>
        <dbReference type="PROSITE-ProRule" id="PRU00285"/>
    </source>
</evidence>
<proteinExistence type="inferred from homology"/>
<comment type="function">
    <text evidence="1">Associates with aggregated proteins, together with IbpA, to stabilize and protect them from irreversible denaturation and extensive proteolysis during heat shock and oxidative stress. Aggregated proteins bound to the IbpAB complex are more efficiently refolded and reactivated by the ATP-dependent chaperone systems ClpB and DnaK/DnaJ/GrpE. Its activity is ATP-independent.</text>
</comment>
<comment type="subunit">
    <text evidence="1">Homodimer. Forms homomultimers of about 100-150 subunits at optimal growth temperatures. Conformation changes to oligomers at high temperatures or high ionic concentrations. The decrease in size of the multimers is accompanied by an increase in chaperone activity.</text>
</comment>
<comment type="subcellular location">
    <subcellularLocation>
        <location evidence="1">Cytoplasm</location>
    </subcellularLocation>
</comment>
<comment type="domain">
    <text evidence="1">The N- and C-terminal flexible termini are involved in oligomerization and in the binding of non-native substrate proteins, and are essential for chaperone activity.</text>
</comment>
<comment type="similarity">
    <text evidence="1 2">Belongs to the small heat shock protein (HSP20) family.</text>
</comment>
<protein>
    <recommendedName>
        <fullName evidence="1">Small heat shock protein IbpB</fullName>
    </recommendedName>
    <alternativeName>
        <fullName evidence="1">16 kDa heat shock protein B</fullName>
    </alternativeName>
</protein>
<name>IBPB_SALSV</name>
<organism>
    <name type="scientific">Salmonella schwarzengrund (strain CVM19633)</name>
    <dbReference type="NCBI Taxonomy" id="439843"/>
    <lineage>
        <taxon>Bacteria</taxon>
        <taxon>Pseudomonadati</taxon>
        <taxon>Pseudomonadota</taxon>
        <taxon>Gammaproteobacteria</taxon>
        <taxon>Enterobacterales</taxon>
        <taxon>Enterobacteriaceae</taxon>
        <taxon>Salmonella</taxon>
    </lineage>
</organism>
<dbReference type="EMBL" id="CP001127">
    <property type="protein sequence ID" value="ACF90537.1"/>
    <property type="molecule type" value="Genomic_DNA"/>
</dbReference>
<dbReference type="RefSeq" id="WP_001246919.1">
    <property type="nucleotide sequence ID" value="NC_011094.1"/>
</dbReference>
<dbReference type="SMR" id="B4TMX6"/>
<dbReference type="KEGG" id="sew:SeSA_A4018"/>
<dbReference type="HOGENOM" id="CLU_046737_4_2_6"/>
<dbReference type="Proteomes" id="UP000001865">
    <property type="component" value="Chromosome"/>
</dbReference>
<dbReference type="GO" id="GO:0005737">
    <property type="term" value="C:cytoplasm"/>
    <property type="evidence" value="ECO:0007669"/>
    <property type="project" value="UniProtKB-SubCell"/>
</dbReference>
<dbReference type="GO" id="GO:0050821">
    <property type="term" value="P:protein stabilization"/>
    <property type="evidence" value="ECO:0007669"/>
    <property type="project" value="UniProtKB-UniRule"/>
</dbReference>
<dbReference type="CDD" id="cd06470">
    <property type="entry name" value="ACD_IbpA-B_like"/>
    <property type="match status" value="1"/>
</dbReference>
<dbReference type="Gene3D" id="2.60.40.790">
    <property type="match status" value="1"/>
</dbReference>
<dbReference type="HAMAP" id="MF_02001">
    <property type="entry name" value="HSP20_IbpB"/>
    <property type="match status" value="1"/>
</dbReference>
<dbReference type="InterPro" id="IPR002068">
    <property type="entry name" value="A-crystallin/Hsp20_dom"/>
</dbReference>
<dbReference type="InterPro" id="IPR037913">
    <property type="entry name" value="ACD_IbpA/B"/>
</dbReference>
<dbReference type="InterPro" id="IPR008978">
    <property type="entry name" value="HSP20-like_chaperone"/>
</dbReference>
<dbReference type="InterPro" id="IPR022848">
    <property type="entry name" value="HSP20_IbpB"/>
</dbReference>
<dbReference type="NCBIfam" id="NF008618">
    <property type="entry name" value="PRK11597.1"/>
    <property type="match status" value="1"/>
</dbReference>
<dbReference type="PANTHER" id="PTHR47062">
    <property type="match status" value="1"/>
</dbReference>
<dbReference type="PANTHER" id="PTHR47062:SF2">
    <property type="entry name" value="SMALL HEAT SHOCK PROTEIN IBPB"/>
    <property type="match status" value="1"/>
</dbReference>
<dbReference type="Pfam" id="PF00011">
    <property type="entry name" value="HSP20"/>
    <property type="match status" value="1"/>
</dbReference>
<dbReference type="SUPFAM" id="SSF49764">
    <property type="entry name" value="HSP20-like chaperones"/>
    <property type="match status" value="1"/>
</dbReference>
<dbReference type="PROSITE" id="PS01031">
    <property type="entry name" value="SHSP"/>
    <property type="match status" value="1"/>
</dbReference>
<feature type="chain" id="PRO_1000189112" description="Small heat shock protein IbpB">
    <location>
        <begin position="1"/>
        <end position="142"/>
    </location>
</feature>
<feature type="domain" description="sHSP" evidence="2">
    <location>
        <begin position="26"/>
        <end position="137"/>
    </location>
</feature>
<sequence length="142" mass="16084">MRNYDLSPLLRQWIGFDKLANALQNSGESQSFPPYNIEKSDDNHYRITLALAGFRQEDLDIQLEGTRLTVKGTPEQPENEPKWLHQGLVMQPFSLSFTLAENMEVSGATFTNGLLHIDLTRNEPETIAPQRIAINERSALNS</sequence>
<accession>B4TMX6</accession>
<keyword id="KW-0143">Chaperone</keyword>
<keyword id="KW-0963">Cytoplasm</keyword>
<keyword id="KW-0346">Stress response</keyword>
<gene>
    <name evidence="1" type="primary">ibpB</name>
    <name type="ordered locus">SeSA_A4018</name>
</gene>
<reference key="1">
    <citation type="journal article" date="2011" name="J. Bacteriol.">
        <title>Comparative genomics of 28 Salmonella enterica isolates: evidence for CRISPR-mediated adaptive sublineage evolution.</title>
        <authorList>
            <person name="Fricke W.F."/>
            <person name="Mammel M.K."/>
            <person name="McDermott P.F."/>
            <person name="Tartera C."/>
            <person name="White D.G."/>
            <person name="Leclerc J.E."/>
            <person name="Ravel J."/>
            <person name="Cebula T.A."/>
        </authorList>
    </citation>
    <scope>NUCLEOTIDE SEQUENCE [LARGE SCALE GENOMIC DNA]</scope>
    <source>
        <strain>CVM19633</strain>
    </source>
</reference>